<evidence type="ECO:0000255" key="1">
    <source>
        <dbReference type="HAMAP-Rule" id="MF_00242"/>
    </source>
</evidence>
<gene>
    <name evidence="1" type="primary">arcA</name>
    <name type="ordered locus">VC_0423</name>
</gene>
<feature type="chain" id="PRO_1000100751" description="Arginine deiminase">
    <location>
        <begin position="1"/>
        <end position="407"/>
    </location>
</feature>
<feature type="active site" description="Amidino-cysteine intermediate" evidence="1">
    <location>
        <position position="397"/>
    </location>
</feature>
<organism>
    <name type="scientific">Vibrio cholerae serotype O1 (strain ATCC 39315 / El Tor Inaba N16961)</name>
    <dbReference type="NCBI Taxonomy" id="243277"/>
    <lineage>
        <taxon>Bacteria</taxon>
        <taxon>Pseudomonadati</taxon>
        <taxon>Pseudomonadota</taxon>
        <taxon>Gammaproteobacteria</taxon>
        <taxon>Vibrionales</taxon>
        <taxon>Vibrionaceae</taxon>
        <taxon>Vibrio</taxon>
    </lineage>
</organism>
<name>ARCA_VIBCH</name>
<comment type="catalytic activity">
    <reaction evidence="1">
        <text>L-arginine + H2O = L-citrulline + NH4(+)</text>
        <dbReference type="Rhea" id="RHEA:19597"/>
        <dbReference type="ChEBI" id="CHEBI:15377"/>
        <dbReference type="ChEBI" id="CHEBI:28938"/>
        <dbReference type="ChEBI" id="CHEBI:32682"/>
        <dbReference type="ChEBI" id="CHEBI:57743"/>
        <dbReference type="EC" id="3.5.3.6"/>
    </reaction>
</comment>
<comment type="pathway">
    <text evidence="1">Amino-acid degradation; L-arginine degradation via ADI pathway; carbamoyl phosphate from L-arginine: step 1/2.</text>
</comment>
<comment type="subcellular location">
    <subcellularLocation>
        <location evidence="1">Cytoplasm</location>
    </subcellularLocation>
</comment>
<comment type="similarity">
    <text evidence="1">Belongs to the arginine deiminase family.</text>
</comment>
<dbReference type="EC" id="3.5.3.6" evidence="1"/>
<dbReference type="EMBL" id="AE003852">
    <property type="protein sequence ID" value="AAF93596.1"/>
    <property type="molecule type" value="Genomic_DNA"/>
</dbReference>
<dbReference type="PIR" id="F82323">
    <property type="entry name" value="F82323"/>
</dbReference>
<dbReference type="RefSeq" id="NP_230077.1">
    <property type="nucleotide sequence ID" value="NC_002505.1"/>
</dbReference>
<dbReference type="RefSeq" id="WP_001081182.1">
    <property type="nucleotide sequence ID" value="NZ_LT906614.1"/>
</dbReference>
<dbReference type="SMR" id="Q9KUU2"/>
<dbReference type="STRING" id="243277.VC_0423"/>
<dbReference type="DNASU" id="2615684"/>
<dbReference type="EnsemblBacteria" id="AAF93596">
    <property type="protein sequence ID" value="AAF93596"/>
    <property type="gene ID" value="VC_0423"/>
</dbReference>
<dbReference type="KEGG" id="vch:VC_0423"/>
<dbReference type="PATRIC" id="fig|243277.26.peg.398"/>
<dbReference type="eggNOG" id="COG2235">
    <property type="taxonomic scope" value="Bacteria"/>
</dbReference>
<dbReference type="HOGENOM" id="CLU_052662_0_0_6"/>
<dbReference type="UniPathway" id="UPA00254">
    <property type="reaction ID" value="UER00364"/>
</dbReference>
<dbReference type="Proteomes" id="UP000000584">
    <property type="component" value="Chromosome 1"/>
</dbReference>
<dbReference type="GO" id="GO:0005737">
    <property type="term" value="C:cytoplasm"/>
    <property type="evidence" value="ECO:0007669"/>
    <property type="project" value="UniProtKB-SubCell"/>
</dbReference>
<dbReference type="GO" id="GO:0016990">
    <property type="term" value="F:arginine deiminase activity"/>
    <property type="evidence" value="ECO:0000318"/>
    <property type="project" value="GO_Central"/>
</dbReference>
<dbReference type="GO" id="GO:0019547">
    <property type="term" value="P:arginine catabolic process to ornithine"/>
    <property type="evidence" value="ECO:0007669"/>
    <property type="project" value="UniProtKB-UniRule"/>
</dbReference>
<dbReference type="GO" id="GO:0019546">
    <property type="term" value="P:arginine deiminase pathway"/>
    <property type="evidence" value="ECO:0000318"/>
    <property type="project" value="GO_Central"/>
</dbReference>
<dbReference type="FunFam" id="1.10.3930.10:FF:000002">
    <property type="entry name" value="Arginine deiminase"/>
    <property type="match status" value="1"/>
</dbReference>
<dbReference type="Gene3D" id="1.10.3930.10">
    <property type="entry name" value="Arginine deiminase"/>
    <property type="match status" value="1"/>
</dbReference>
<dbReference type="Gene3D" id="3.75.10.10">
    <property type="entry name" value="L-arginine/glycine Amidinotransferase, Chain A"/>
    <property type="match status" value="1"/>
</dbReference>
<dbReference type="HAMAP" id="MF_00242">
    <property type="entry name" value="Arg_deiminase"/>
    <property type="match status" value="1"/>
</dbReference>
<dbReference type="InterPro" id="IPR003876">
    <property type="entry name" value="Arg_deiminase"/>
</dbReference>
<dbReference type="NCBIfam" id="TIGR01078">
    <property type="entry name" value="arcA"/>
    <property type="match status" value="1"/>
</dbReference>
<dbReference type="NCBIfam" id="NF002381">
    <property type="entry name" value="PRK01388.1"/>
    <property type="match status" value="1"/>
</dbReference>
<dbReference type="PANTHER" id="PTHR47271">
    <property type="entry name" value="ARGININE DEIMINASE"/>
    <property type="match status" value="1"/>
</dbReference>
<dbReference type="PANTHER" id="PTHR47271:SF2">
    <property type="entry name" value="ARGININE DEIMINASE"/>
    <property type="match status" value="1"/>
</dbReference>
<dbReference type="Pfam" id="PF02274">
    <property type="entry name" value="ADI"/>
    <property type="match status" value="1"/>
</dbReference>
<dbReference type="PIRSF" id="PIRSF006356">
    <property type="entry name" value="Arg_deiminase"/>
    <property type="match status" value="1"/>
</dbReference>
<dbReference type="PRINTS" id="PR01466">
    <property type="entry name" value="ARGDEIMINASE"/>
</dbReference>
<dbReference type="SUPFAM" id="SSF55909">
    <property type="entry name" value="Pentein"/>
    <property type="match status" value="1"/>
</dbReference>
<keyword id="KW-0056">Arginine metabolism</keyword>
<keyword id="KW-0963">Cytoplasm</keyword>
<keyword id="KW-0378">Hydrolase</keyword>
<keyword id="KW-1185">Reference proteome</keyword>
<protein>
    <recommendedName>
        <fullName evidence="1">Arginine deiminase</fullName>
        <shortName evidence="1">ADI</shortName>
        <ecNumber evidence="1">3.5.3.6</ecNumber>
    </recommendedName>
    <alternativeName>
        <fullName evidence="1">Arginine dihydrolase</fullName>
        <shortName evidence="1">AD</shortName>
    </alternativeName>
</protein>
<reference key="1">
    <citation type="journal article" date="2000" name="Nature">
        <title>DNA sequence of both chromosomes of the cholera pathogen Vibrio cholerae.</title>
        <authorList>
            <person name="Heidelberg J.F."/>
            <person name="Eisen J.A."/>
            <person name="Nelson W.C."/>
            <person name="Clayton R.A."/>
            <person name="Gwinn M.L."/>
            <person name="Dodson R.J."/>
            <person name="Haft D.H."/>
            <person name="Hickey E.K."/>
            <person name="Peterson J.D."/>
            <person name="Umayam L.A."/>
            <person name="Gill S.R."/>
            <person name="Nelson K.E."/>
            <person name="Read T.D."/>
            <person name="Tettelin H."/>
            <person name="Richardson D.L."/>
            <person name="Ermolaeva M.D."/>
            <person name="Vamathevan J.J."/>
            <person name="Bass S."/>
            <person name="Qin H."/>
            <person name="Dragoi I."/>
            <person name="Sellers P."/>
            <person name="McDonald L.A."/>
            <person name="Utterback T.R."/>
            <person name="Fleischmann R.D."/>
            <person name="Nierman W.C."/>
            <person name="White O."/>
            <person name="Salzberg S.L."/>
            <person name="Smith H.O."/>
            <person name="Colwell R.R."/>
            <person name="Mekalanos J.J."/>
            <person name="Venter J.C."/>
            <person name="Fraser C.M."/>
        </authorList>
    </citation>
    <scope>NUCLEOTIDE SEQUENCE [LARGE SCALE GENOMIC DNA]</scope>
    <source>
        <strain>ATCC 39315 / El Tor Inaba N16961</strain>
    </source>
</reference>
<sequence length="407" mass="45904">MNRLYVGSEVGQLRRVLLNRPERALTHLTPSNCHELLFDDVLAVEAAGVEHDAFANTLRTQDVEVLLLHDLLEETLAIPEARQWLLNTQISDFRFGPTFARELRHALNHLDDHHLTTLLLGGLAFSELHLESDSMLPKMRQPLDFVIEPLPNHLFTRDTSCWVYGGVSLNPMMKPARQRETNHLRAIYRWHPIFAQHPFIHYFGIDDLHYDNANIEGGDVLVIGKGAVLIGMSERTSPQGVENLAAALFKHGQASKVIAINLPKHRSCMHLDTVMTHMDVDTFSVYPEVMRKDLPTWRLTPKGNNGDMRVEQVPSYLHAIEQALGVDYLKIITTGGNSYEAEREQWNDANNVLTVKPGVVIGYERNVYTNEKYDKAGIKVLTIPGNELGRGRGGARCMSCPIERDGI</sequence>
<accession>Q9KUU2</accession>
<proteinExistence type="inferred from homology"/>